<accession>P05688</accession>
<protein>
    <recommendedName>
        <fullName>Chorion class high-cysteine HCB protein 12</fullName>
        <shortName>HC-B.12</shortName>
    </recommendedName>
</protein>
<dbReference type="EMBL" id="K02835">
    <property type="protein sequence ID" value="AAA27835.1"/>
    <property type="molecule type" value="Genomic_DNA"/>
</dbReference>
<dbReference type="InParanoid" id="P05688"/>
<dbReference type="Proteomes" id="UP000005204">
    <property type="component" value="Unassembled WGS sequence"/>
</dbReference>
<dbReference type="GO" id="GO:0042600">
    <property type="term" value="C:egg chorion"/>
    <property type="evidence" value="ECO:0007669"/>
    <property type="project" value="InterPro"/>
</dbReference>
<dbReference type="GO" id="GO:0005213">
    <property type="term" value="F:structural constituent of egg chorion"/>
    <property type="evidence" value="ECO:0007669"/>
    <property type="project" value="InterPro"/>
</dbReference>
<dbReference type="GO" id="GO:0007304">
    <property type="term" value="P:chorion-containing eggshell formation"/>
    <property type="evidence" value="ECO:0007669"/>
    <property type="project" value="InterPro"/>
</dbReference>
<dbReference type="InterPro" id="IPR002635">
    <property type="entry name" value="Chorion"/>
</dbReference>
<dbReference type="Pfam" id="PF01723">
    <property type="entry name" value="Chorion_1"/>
    <property type="match status" value="1"/>
</dbReference>
<evidence type="ECO:0000305" key="1"/>
<feature type="signal peptide">
    <location>
        <begin position="1"/>
        <end position="21"/>
    </location>
</feature>
<feature type="chain" id="PRO_0000005385" description="Chorion class high-cysteine HCB protein 12">
    <location>
        <begin position="22"/>
        <end position="131"/>
    </location>
</feature>
<feature type="region of interest" description="Left arm">
    <location>
        <begin position="22"/>
        <end position="46"/>
    </location>
</feature>
<feature type="region of interest" description="Central domain">
    <location>
        <begin position="47"/>
        <end position="110"/>
    </location>
</feature>
<feature type="region of interest" description="Right arm (Gly-rich tandem repeats)">
    <location>
        <begin position="111"/>
        <end position="131"/>
    </location>
</feature>
<reference key="1">
    <citation type="journal article" date="1984" name="Proc. Natl. Acad. Sci. U.S.A.">
        <title>DNA sequence transfer between two high-cysteine chorion gene families in the silkmoth Bombyx mori.</title>
        <authorList>
            <person name="Iatrou K."/>
            <person name="Tsitilou S.G."/>
            <person name="Kafatos F.C."/>
        </authorList>
    </citation>
    <scope>NUCLEOTIDE SEQUENCE [GENOMIC DNA]</scope>
</reference>
<comment type="function">
    <text>This protein is one of many from the eggshell of the silk moth.</text>
</comment>
<comment type="similarity">
    <text evidence="1">Belongs to the chorion protein family.</text>
</comment>
<keyword id="KW-1185">Reference proteome</keyword>
<keyword id="KW-0677">Repeat</keyword>
<keyword id="KW-0732">Signal</keyword>
<sequence length="131" mass="12474">MAAKLIVFVCAIALVAQSVLGTGCGCCCRGCGCGCGGCGCGCCENFRVCSNSAAPTGLSICSENRYKGDVCVCGEVPFLGTADVCGNMCSSGCGCIDYGCGNGCVGITRSCGGCGCGCGGCGCGCGGCGCC</sequence>
<proteinExistence type="inferred from homology"/>
<name>CHHB1_BOMMO</name>
<organism>
    <name type="scientific">Bombyx mori</name>
    <name type="common">Silk moth</name>
    <dbReference type="NCBI Taxonomy" id="7091"/>
    <lineage>
        <taxon>Eukaryota</taxon>
        <taxon>Metazoa</taxon>
        <taxon>Ecdysozoa</taxon>
        <taxon>Arthropoda</taxon>
        <taxon>Hexapoda</taxon>
        <taxon>Insecta</taxon>
        <taxon>Pterygota</taxon>
        <taxon>Neoptera</taxon>
        <taxon>Endopterygota</taxon>
        <taxon>Lepidoptera</taxon>
        <taxon>Glossata</taxon>
        <taxon>Ditrysia</taxon>
        <taxon>Bombycoidea</taxon>
        <taxon>Bombycidae</taxon>
        <taxon>Bombycinae</taxon>
        <taxon>Bombyx</taxon>
    </lineage>
</organism>